<feature type="chain" id="PRO_1000212246" description="Ribosomal RNA small subunit methyltransferase A">
    <location>
        <begin position="1"/>
        <end position="291"/>
    </location>
</feature>
<feature type="binding site" evidence="1">
    <location>
        <position position="29"/>
    </location>
    <ligand>
        <name>S-adenosyl-L-methionine</name>
        <dbReference type="ChEBI" id="CHEBI:59789"/>
    </ligand>
</feature>
<feature type="binding site" evidence="1">
    <location>
        <position position="31"/>
    </location>
    <ligand>
        <name>S-adenosyl-L-methionine</name>
        <dbReference type="ChEBI" id="CHEBI:59789"/>
    </ligand>
</feature>
<feature type="binding site" evidence="1">
    <location>
        <position position="56"/>
    </location>
    <ligand>
        <name>S-adenosyl-L-methionine</name>
        <dbReference type="ChEBI" id="CHEBI:59789"/>
    </ligand>
</feature>
<feature type="binding site" evidence="1">
    <location>
        <position position="77"/>
    </location>
    <ligand>
        <name>S-adenosyl-L-methionine</name>
        <dbReference type="ChEBI" id="CHEBI:59789"/>
    </ligand>
</feature>
<feature type="binding site" evidence="1">
    <location>
        <position position="102"/>
    </location>
    <ligand>
        <name>S-adenosyl-L-methionine</name>
        <dbReference type="ChEBI" id="CHEBI:59789"/>
    </ligand>
</feature>
<feature type="binding site" evidence="1">
    <location>
        <position position="127"/>
    </location>
    <ligand>
        <name>S-adenosyl-L-methionine</name>
        <dbReference type="ChEBI" id="CHEBI:59789"/>
    </ligand>
</feature>
<protein>
    <recommendedName>
        <fullName evidence="1">Ribosomal RNA small subunit methyltransferase A</fullName>
        <ecNumber evidence="1">2.1.1.182</ecNumber>
    </recommendedName>
    <alternativeName>
        <fullName evidence="1">16S rRNA (adenine(1518)-N(6)/adenine(1519)-N(6))-dimethyltransferase</fullName>
    </alternativeName>
    <alternativeName>
        <fullName evidence="1">16S rRNA dimethyladenosine transferase</fullName>
    </alternativeName>
    <alternativeName>
        <fullName evidence="1">16S rRNA dimethylase</fullName>
    </alternativeName>
    <alternativeName>
        <fullName evidence="1">S-adenosylmethionine-6-N', N'-adenosyl(rRNA) dimethyltransferase</fullName>
    </alternativeName>
</protein>
<gene>
    <name evidence="1" type="primary">rsmA</name>
    <name evidence="1" type="synonym">ksgA</name>
    <name type="ordered locus">GWCH70_0037</name>
</gene>
<proteinExistence type="inferred from homology"/>
<accession>C5D363</accession>
<name>RSMA_GEOSW</name>
<sequence length="291" mass="32882">MNKDIATPGRTREILEKYGFSFKKSLGQNFLIDTNILRKIVDFAELSDETGAIEIGPGIGALTEQLARRAKKVVAFEIDQRLLPILEDTLSPYGNIRIIHQDVLKADIHRVISEEFTGMTDIMVVANLPYYVTTPIIMKLLTDRLPIRGMVVMLQKEVADRLAAKPGTKDYGSLSIAIQYYTEAETVMTVPRTVFIPQPNVDSAVIRLIKRKQPPVKVEDEAFFFQVVRASFAQRRKTILNNLVNNLPNGKAMKEQIERVLTETDIDPRRRGETLTMEEFAALSNALQHVL</sequence>
<comment type="function">
    <text evidence="1">Specifically dimethylates two adjacent adenosines (A1518 and A1519) in the loop of a conserved hairpin near the 3'-end of 16S rRNA in the 30S particle. May play a critical role in biogenesis of 30S subunits.</text>
</comment>
<comment type="catalytic activity">
    <reaction evidence="1">
        <text>adenosine(1518)/adenosine(1519) in 16S rRNA + 4 S-adenosyl-L-methionine = N(6)-dimethyladenosine(1518)/N(6)-dimethyladenosine(1519) in 16S rRNA + 4 S-adenosyl-L-homocysteine + 4 H(+)</text>
        <dbReference type="Rhea" id="RHEA:19609"/>
        <dbReference type="Rhea" id="RHEA-COMP:10232"/>
        <dbReference type="Rhea" id="RHEA-COMP:10233"/>
        <dbReference type="ChEBI" id="CHEBI:15378"/>
        <dbReference type="ChEBI" id="CHEBI:57856"/>
        <dbReference type="ChEBI" id="CHEBI:59789"/>
        <dbReference type="ChEBI" id="CHEBI:74411"/>
        <dbReference type="ChEBI" id="CHEBI:74493"/>
        <dbReference type="EC" id="2.1.1.182"/>
    </reaction>
</comment>
<comment type="subcellular location">
    <subcellularLocation>
        <location evidence="1">Cytoplasm</location>
    </subcellularLocation>
</comment>
<comment type="similarity">
    <text evidence="1">Belongs to the class I-like SAM-binding methyltransferase superfamily. rRNA adenine N(6)-methyltransferase family. RsmA subfamily.</text>
</comment>
<organism>
    <name type="scientific">Geobacillus sp. (strain WCH70)</name>
    <dbReference type="NCBI Taxonomy" id="471223"/>
    <lineage>
        <taxon>Bacteria</taxon>
        <taxon>Bacillati</taxon>
        <taxon>Bacillota</taxon>
        <taxon>Bacilli</taxon>
        <taxon>Bacillales</taxon>
        <taxon>Anoxybacillaceae</taxon>
        <taxon>Geobacillus</taxon>
    </lineage>
</organism>
<reference key="1">
    <citation type="submission" date="2009-06" db="EMBL/GenBank/DDBJ databases">
        <title>Complete sequence of chromosome of Geopacillus sp. WCH70.</title>
        <authorList>
            <consortium name="US DOE Joint Genome Institute"/>
            <person name="Lucas S."/>
            <person name="Copeland A."/>
            <person name="Lapidus A."/>
            <person name="Glavina del Rio T."/>
            <person name="Dalin E."/>
            <person name="Tice H."/>
            <person name="Bruce D."/>
            <person name="Goodwin L."/>
            <person name="Pitluck S."/>
            <person name="Chertkov O."/>
            <person name="Brettin T."/>
            <person name="Detter J.C."/>
            <person name="Han C."/>
            <person name="Larimer F."/>
            <person name="Land M."/>
            <person name="Hauser L."/>
            <person name="Kyrpides N."/>
            <person name="Mikhailova N."/>
            <person name="Brumm P."/>
            <person name="Mead D.A."/>
            <person name="Richardson P."/>
        </authorList>
    </citation>
    <scope>NUCLEOTIDE SEQUENCE [LARGE SCALE GENOMIC DNA]</scope>
    <source>
        <strain>WCH70</strain>
    </source>
</reference>
<dbReference type="EC" id="2.1.1.182" evidence="1"/>
<dbReference type="EMBL" id="CP001638">
    <property type="protein sequence ID" value="ACS22979.1"/>
    <property type="molecule type" value="Genomic_DNA"/>
</dbReference>
<dbReference type="SMR" id="C5D363"/>
<dbReference type="STRING" id="471223.GWCH70_0037"/>
<dbReference type="KEGG" id="gwc:GWCH70_0037"/>
<dbReference type="eggNOG" id="COG0030">
    <property type="taxonomic scope" value="Bacteria"/>
</dbReference>
<dbReference type="HOGENOM" id="CLU_041220_0_0_9"/>
<dbReference type="OrthoDB" id="9814755at2"/>
<dbReference type="GO" id="GO:0005829">
    <property type="term" value="C:cytosol"/>
    <property type="evidence" value="ECO:0007669"/>
    <property type="project" value="TreeGrafter"/>
</dbReference>
<dbReference type="GO" id="GO:0052908">
    <property type="term" value="F:16S rRNA (adenine(1518)-N(6)/adenine(1519)-N(6))-dimethyltransferase activity"/>
    <property type="evidence" value="ECO:0007669"/>
    <property type="project" value="UniProtKB-EC"/>
</dbReference>
<dbReference type="GO" id="GO:0003723">
    <property type="term" value="F:RNA binding"/>
    <property type="evidence" value="ECO:0007669"/>
    <property type="project" value="UniProtKB-KW"/>
</dbReference>
<dbReference type="CDD" id="cd02440">
    <property type="entry name" value="AdoMet_MTases"/>
    <property type="match status" value="1"/>
</dbReference>
<dbReference type="FunFam" id="1.10.8.100:FF:000002">
    <property type="entry name" value="Ribosomal RNA small subunit methyltransferase A"/>
    <property type="match status" value="1"/>
</dbReference>
<dbReference type="FunFam" id="3.40.50.150:FF:000023">
    <property type="entry name" value="Ribosomal RNA small subunit methyltransferase A"/>
    <property type="match status" value="1"/>
</dbReference>
<dbReference type="Gene3D" id="1.10.8.100">
    <property type="entry name" value="Ribosomal RNA adenine dimethylase-like, domain 2"/>
    <property type="match status" value="1"/>
</dbReference>
<dbReference type="Gene3D" id="3.40.50.150">
    <property type="entry name" value="Vaccinia Virus protein VP39"/>
    <property type="match status" value="1"/>
</dbReference>
<dbReference type="HAMAP" id="MF_00607">
    <property type="entry name" value="16SrRNA_methyltr_A"/>
    <property type="match status" value="1"/>
</dbReference>
<dbReference type="InterPro" id="IPR001737">
    <property type="entry name" value="KsgA/Erm"/>
</dbReference>
<dbReference type="InterPro" id="IPR023165">
    <property type="entry name" value="rRNA_Ade_diMease-like_C"/>
</dbReference>
<dbReference type="InterPro" id="IPR020596">
    <property type="entry name" value="rRNA_Ade_Mease_Trfase_CS"/>
</dbReference>
<dbReference type="InterPro" id="IPR020598">
    <property type="entry name" value="rRNA_Ade_methylase_Trfase_N"/>
</dbReference>
<dbReference type="InterPro" id="IPR011530">
    <property type="entry name" value="rRNA_adenine_dimethylase"/>
</dbReference>
<dbReference type="InterPro" id="IPR029063">
    <property type="entry name" value="SAM-dependent_MTases_sf"/>
</dbReference>
<dbReference type="NCBIfam" id="TIGR00755">
    <property type="entry name" value="ksgA"/>
    <property type="match status" value="1"/>
</dbReference>
<dbReference type="PANTHER" id="PTHR11727">
    <property type="entry name" value="DIMETHYLADENOSINE TRANSFERASE"/>
    <property type="match status" value="1"/>
</dbReference>
<dbReference type="PANTHER" id="PTHR11727:SF7">
    <property type="entry name" value="DIMETHYLADENOSINE TRANSFERASE-RELATED"/>
    <property type="match status" value="1"/>
</dbReference>
<dbReference type="Pfam" id="PF00398">
    <property type="entry name" value="RrnaAD"/>
    <property type="match status" value="1"/>
</dbReference>
<dbReference type="SMART" id="SM00650">
    <property type="entry name" value="rADc"/>
    <property type="match status" value="1"/>
</dbReference>
<dbReference type="SUPFAM" id="SSF53335">
    <property type="entry name" value="S-adenosyl-L-methionine-dependent methyltransferases"/>
    <property type="match status" value="1"/>
</dbReference>
<dbReference type="PROSITE" id="PS01131">
    <property type="entry name" value="RRNA_A_DIMETH"/>
    <property type="match status" value="1"/>
</dbReference>
<dbReference type="PROSITE" id="PS51689">
    <property type="entry name" value="SAM_RNA_A_N6_MT"/>
    <property type="match status" value="1"/>
</dbReference>
<keyword id="KW-0963">Cytoplasm</keyword>
<keyword id="KW-0489">Methyltransferase</keyword>
<keyword id="KW-0694">RNA-binding</keyword>
<keyword id="KW-0698">rRNA processing</keyword>
<keyword id="KW-0949">S-adenosyl-L-methionine</keyword>
<keyword id="KW-0808">Transferase</keyword>
<evidence type="ECO:0000255" key="1">
    <source>
        <dbReference type="HAMAP-Rule" id="MF_00607"/>
    </source>
</evidence>